<sequence>MRVILLGAPGAGKGTQAKFITEKFGIPQISTGDMLRAAVKAGTELGLKAKSVMDAGNLVSDDLIIGLIKDRLAEPDCANGVLFDGFPRTIPQAEALLKAGLEIDHVLEIAVDDEEIVKRMSGRRVHEGSGRIYHTIFNPPKVEGVDDVTGESLVQRKDDVEETVRLRLKVYHDQTKPLVEFYSKLEAQNGKPKCSHIPGVGSVEEITAKVLVALS</sequence>
<accession>Q886R8</accession>
<organism>
    <name type="scientific">Pseudomonas syringae pv. tomato (strain ATCC BAA-871 / DC3000)</name>
    <dbReference type="NCBI Taxonomy" id="223283"/>
    <lineage>
        <taxon>Bacteria</taxon>
        <taxon>Pseudomonadati</taxon>
        <taxon>Pseudomonadota</taxon>
        <taxon>Gammaproteobacteria</taxon>
        <taxon>Pseudomonadales</taxon>
        <taxon>Pseudomonadaceae</taxon>
        <taxon>Pseudomonas</taxon>
    </lineage>
</organism>
<evidence type="ECO:0000255" key="1">
    <source>
        <dbReference type="HAMAP-Rule" id="MF_00235"/>
    </source>
</evidence>
<dbReference type="EC" id="2.7.4.3" evidence="1"/>
<dbReference type="EMBL" id="AE016853">
    <property type="protein sequence ID" value="AAO55029.1"/>
    <property type="molecule type" value="Genomic_DNA"/>
</dbReference>
<dbReference type="RefSeq" id="NP_791334.1">
    <property type="nucleotide sequence ID" value="NC_004578.1"/>
</dbReference>
<dbReference type="RefSeq" id="WP_011103583.1">
    <property type="nucleotide sequence ID" value="NC_004578.1"/>
</dbReference>
<dbReference type="SMR" id="Q886R8"/>
<dbReference type="STRING" id="223283.PSPTO_1509"/>
<dbReference type="GeneID" id="1183146"/>
<dbReference type="KEGG" id="pst:PSPTO_1509"/>
<dbReference type="PATRIC" id="fig|223283.9.peg.1531"/>
<dbReference type="eggNOG" id="COG0563">
    <property type="taxonomic scope" value="Bacteria"/>
</dbReference>
<dbReference type="HOGENOM" id="CLU_032354_1_2_6"/>
<dbReference type="OrthoDB" id="9805030at2"/>
<dbReference type="PhylomeDB" id="Q886R8"/>
<dbReference type="UniPathway" id="UPA00588">
    <property type="reaction ID" value="UER00649"/>
</dbReference>
<dbReference type="Proteomes" id="UP000002515">
    <property type="component" value="Chromosome"/>
</dbReference>
<dbReference type="GO" id="GO:0005737">
    <property type="term" value="C:cytoplasm"/>
    <property type="evidence" value="ECO:0007669"/>
    <property type="project" value="UniProtKB-SubCell"/>
</dbReference>
<dbReference type="GO" id="GO:0004017">
    <property type="term" value="F:adenylate kinase activity"/>
    <property type="evidence" value="ECO:0007669"/>
    <property type="project" value="UniProtKB-UniRule"/>
</dbReference>
<dbReference type="GO" id="GO:0005524">
    <property type="term" value="F:ATP binding"/>
    <property type="evidence" value="ECO:0007669"/>
    <property type="project" value="UniProtKB-UniRule"/>
</dbReference>
<dbReference type="GO" id="GO:0044209">
    <property type="term" value="P:AMP salvage"/>
    <property type="evidence" value="ECO:0007669"/>
    <property type="project" value="UniProtKB-UniRule"/>
</dbReference>
<dbReference type="CDD" id="cd01428">
    <property type="entry name" value="ADK"/>
    <property type="match status" value="1"/>
</dbReference>
<dbReference type="FunFam" id="3.40.50.300:FF:000106">
    <property type="entry name" value="Adenylate kinase mitochondrial"/>
    <property type="match status" value="1"/>
</dbReference>
<dbReference type="Gene3D" id="3.40.50.300">
    <property type="entry name" value="P-loop containing nucleotide triphosphate hydrolases"/>
    <property type="match status" value="1"/>
</dbReference>
<dbReference type="HAMAP" id="MF_00235">
    <property type="entry name" value="Adenylate_kinase_Adk"/>
    <property type="match status" value="1"/>
</dbReference>
<dbReference type="InterPro" id="IPR006259">
    <property type="entry name" value="Adenyl_kin_sub"/>
</dbReference>
<dbReference type="InterPro" id="IPR000850">
    <property type="entry name" value="Adenylat/UMP-CMP_kin"/>
</dbReference>
<dbReference type="InterPro" id="IPR033690">
    <property type="entry name" value="Adenylat_kinase_CS"/>
</dbReference>
<dbReference type="InterPro" id="IPR007862">
    <property type="entry name" value="Adenylate_kinase_lid-dom"/>
</dbReference>
<dbReference type="InterPro" id="IPR027417">
    <property type="entry name" value="P-loop_NTPase"/>
</dbReference>
<dbReference type="NCBIfam" id="TIGR01351">
    <property type="entry name" value="adk"/>
    <property type="match status" value="1"/>
</dbReference>
<dbReference type="NCBIfam" id="NF001379">
    <property type="entry name" value="PRK00279.1-1"/>
    <property type="match status" value="1"/>
</dbReference>
<dbReference type="NCBIfam" id="NF001380">
    <property type="entry name" value="PRK00279.1-2"/>
    <property type="match status" value="1"/>
</dbReference>
<dbReference type="NCBIfam" id="NF001381">
    <property type="entry name" value="PRK00279.1-3"/>
    <property type="match status" value="1"/>
</dbReference>
<dbReference type="NCBIfam" id="NF011100">
    <property type="entry name" value="PRK14527.1"/>
    <property type="match status" value="1"/>
</dbReference>
<dbReference type="PANTHER" id="PTHR23359">
    <property type="entry name" value="NUCLEOTIDE KINASE"/>
    <property type="match status" value="1"/>
</dbReference>
<dbReference type="Pfam" id="PF00406">
    <property type="entry name" value="ADK"/>
    <property type="match status" value="1"/>
</dbReference>
<dbReference type="Pfam" id="PF05191">
    <property type="entry name" value="ADK_lid"/>
    <property type="match status" value="1"/>
</dbReference>
<dbReference type="PRINTS" id="PR00094">
    <property type="entry name" value="ADENYLTKNASE"/>
</dbReference>
<dbReference type="SUPFAM" id="SSF52540">
    <property type="entry name" value="P-loop containing nucleoside triphosphate hydrolases"/>
    <property type="match status" value="1"/>
</dbReference>
<dbReference type="PROSITE" id="PS00113">
    <property type="entry name" value="ADENYLATE_KINASE"/>
    <property type="match status" value="1"/>
</dbReference>
<feature type="chain" id="PRO_0000158833" description="Adenylate kinase">
    <location>
        <begin position="1"/>
        <end position="215"/>
    </location>
</feature>
<feature type="region of interest" description="NMP" evidence="1">
    <location>
        <begin position="30"/>
        <end position="59"/>
    </location>
</feature>
<feature type="region of interest" description="LID" evidence="1">
    <location>
        <begin position="122"/>
        <end position="159"/>
    </location>
</feature>
<feature type="binding site" evidence="1">
    <location>
        <begin position="10"/>
        <end position="15"/>
    </location>
    <ligand>
        <name>ATP</name>
        <dbReference type="ChEBI" id="CHEBI:30616"/>
    </ligand>
</feature>
<feature type="binding site" evidence="1">
    <location>
        <position position="31"/>
    </location>
    <ligand>
        <name>AMP</name>
        <dbReference type="ChEBI" id="CHEBI:456215"/>
    </ligand>
</feature>
<feature type="binding site" evidence="1">
    <location>
        <position position="36"/>
    </location>
    <ligand>
        <name>AMP</name>
        <dbReference type="ChEBI" id="CHEBI:456215"/>
    </ligand>
</feature>
<feature type="binding site" evidence="1">
    <location>
        <begin position="57"/>
        <end position="59"/>
    </location>
    <ligand>
        <name>AMP</name>
        <dbReference type="ChEBI" id="CHEBI:456215"/>
    </ligand>
</feature>
<feature type="binding site" evidence="1">
    <location>
        <begin position="85"/>
        <end position="88"/>
    </location>
    <ligand>
        <name>AMP</name>
        <dbReference type="ChEBI" id="CHEBI:456215"/>
    </ligand>
</feature>
<feature type="binding site" evidence="1">
    <location>
        <position position="92"/>
    </location>
    <ligand>
        <name>AMP</name>
        <dbReference type="ChEBI" id="CHEBI:456215"/>
    </ligand>
</feature>
<feature type="binding site" evidence="1">
    <location>
        <position position="123"/>
    </location>
    <ligand>
        <name>ATP</name>
        <dbReference type="ChEBI" id="CHEBI:30616"/>
    </ligand>
</feature>
<feature type="binding site" evidence="1">
    <location>
        <begin position="132"/>
        <end position="133"/>
    </location>
    <ligand>
        <name>ATP</name>
        <dbReference type="ChEBI" id="CHEBI:30616"/>
    </ligand>
</feature>
<feature type="binding site" evidence="1">
    <location>
        <position position="156"/>
    </location>
    <ligand>
        <name>AMP</name>
        <dbReference type="ChEBI" id="CHEBI:456215"/>
    </ligand>
</feature>
<feature type="binding site" evidence="1">
    <location>
        <position position="167"/>
    </location>
    <ligand>
        <name>AMP</name>
        <dbReference type="ChEBI" id="CHEBI:456215"/>
    </ligand>
</feature>
<feature type="binding site" evidence="1">
    <location>
        <position position="201"/>
    </location>
    <ligand>
        <name>ATP</name>
        <dbReference type="ChEBI" id="CHEBI:30616"/>
    </ligand>
</feature>
<proteinExistence type="inferred from homology"/>
<comment type="function">
    <text evidence="1">Catalyzes the reversible transfer of the terminal phosphate group between ATP and AMP. Plays an important role in cellular energy homeostasis and in adenine nucleotide metabolism.</text>
</comment>
<comment type="catalytic activity">
    <reaction evidence="1">
        <text>AMP + ATP = 2 ADP</text>
        <dbReference type="Rhea" id="RHEA:12973"/>
        <dbReference type="ChEBI" id="CHEBI:30616"/>
        <dbReference type="ChEBI" id="CHEBI:456215"/>
        <dbReference type="ChEBI" id="CHEBI:456216"/>
        <dbReference type="EC" id="2.7.4.3"/>
    </reaction>
</comment>
<comment type="pathway">
    <text evidence="1">Purine metabolism; AMP biosynthesis via salvage pathway; AMP from ADP: step 1/1.</text>
</comment>
<comment type="subunit">
    <text evidence="1">Monomer.</text>
</comment>
<comment type="subcellular location">
    <subcellularLocation>
        <location evidence="1">Cytoplasm</location>
    </subcellularLocation>
</comment>
<comment type="domain">
    <text evidence="1">Consists of three domains, a large central CORE domain and two small peripheral domains, NMPbind and LID, which undergo movements during catalysis. The LID domain closes over the site of phosphoryl transfer upon ATP binding. Assembling and dissambling the active center during each catalytic cycle provides an effective means to prevent ATP hydrolysis.</text>
</comment>
<comment type="similarity">
    <text evidence="1">Belongs to the adenylate kinase family.</text>
</comment>
<name>KAD_PSESM</name>
<protein>
    <recommendedName>
        <fullName evidence="1">Adenylate kinase</fullName>
        <shortName evidence="1">AK</shortName>
        <ecNumber evidence="1">2.7.4.3</ecNumber>
    </recommendedName>
    <alternativeName>
        <fullName evidence="1">ATP-AMP transphosphorylase</fullName>
    </alternativeName>
    <alternativeName>
        <fullName evidence="1">ATP:AMP phosphotransferase</fullName>
    </alternativeName>
    <alternativeName>
        <fullName evidence="1">Adenylate monophosphate kinase</fullName>
    </alternativeName>
</protein>
<reference key="1">
    <citation type="journal article" date="2003" name="Proc. Natl. Acad. Sci. U.S.A.">
        <title>The complete genome sequence of the Arabidopsis and tomato pathogen Pseudomonas syringae pv. tomato DC3000.</title>
        <authorList>
            <person name="Buell C.R."/>
            <person name="Joardar V."/>
            <person name="Lindeberg M."/>
            <person name="Selengut J."/>
            <person name="Paulsen I.T."/>
            <person name="Gwinn M.L."/>
            <person name="Dodson R.J."/>
            <person name="DeBoy R.T."/>
            <person name="Durkin A.S."/>
            <person name="Kolonay J.F."/>
            <person name="Madupu R."/>
            <person name="Daugherty S.C."/>
            <person name="Brinkac L.M."/>
            <person name="Beanan M.J."/>
            <person name="Haft D.H."/>
            <person name="Nelson W.C."/>
            <person name="Davidsen T.M."/>
            <person name="Zafar N."/>
            <person name="Zhou L."/>
            <person name="Liu J."/>
            <person name="Yuan Q."/>
            <person name="Khouri H.M."/>
            <person name="Fedorova N.B."/>
            <person name="Tran B."/>
            <person name="Russell D."/>
            <person name="Berry K.J."/>
            <person name="Utterback T.R."/>
            <person name="Van Aken S.E."/>
            <person name="Feldblyum T.V."/>
            <person name="D'Ascenzo M."/>
            <person name="Deng W.-L."/>
            <person name="Ramos A.R."/>
            <person name="Alfano J.R."/>
            <person name="Cartinhour S."/>
            <person name="Chatterjee A.K."/>
            <person name="Delaney T.P."/>
            <person name="Lazarowitz S.G."/>
            <person name="Martin G.B."/>
            <person name="Schneider D.J."/>
            <person name="Tang X."/>
            <person name="Bender C.L."/>
            <person name="White O."/>
            <person name="Fraser C.M."/>
            <person name="Collmer A."/>
        </authorList>
    </citation>
    <scope>NUCLEOTIDE SEQUENCE [LARGE SCALE GENOMIC DNA]</scope>
    <source>
        <strain>ATCC BAA-871 / DC3000</strain>
    </source>
</reference>
<keyword id="KW-0067">ATP-binding</keyword>
<keyword id="KW-0963">Cytoplasm</keyword>
<keyword id="KW-0418">Kinase</keyword>
<keyword id="KW-0545">Nucleotide biosynthesis</keyword>
<keyword id="KW-0547">Nucleotide-binding</keyword>
<keyword id="KW-1185">Reference proteome</keyword>
<keyword id="KW-0808">Transferase</keyword>
<gene>
    <name evidence="1" type="primary">adk</name>
    <name type="ordered locus">PSPTO_1509</name>
</gene>